<comment type="function">
    <text evidence="2 6">Histone demethylase required for brain development. Specifically demethylates dimethylated 'Lys-9', 'Lys-27' and 'Lys-36' (H3K9me2, H3K27me2, H3K36me2, respectively) of histone H3 and monomethylated histone H4 'Lys-20' residue (H4K20Me1), thereby playing a central role in histone code. Specifically binds trimethylated 'Lys-4' of histone H3 (H3K4me3), affecting histone demethylase specificity: in presence of H3K4me3, it has no demethylase activity toward H3K9me2, while it has high activity toward H3K27me2. Demethylates H3K9me2 in absence of H3K4me3. Has activity toward H4K20Me1 only when nucleosome is used as a substrate and when not histone octamer is used as substrate.</text>
</comment>
<comment type="catalytic activity">
    <reaction evidence="6">
        <text>N(6),N(6)-dimethyl-L-lysyl(9)-[histone H3] + 2 2-oxoglutarate + 2 O2 = L-lysyl(9)-[histone H3] + 2 formaldehyde + 2 succinate + 2 CO2</text>
        <dbReference type="Rhea" id="RHEA:60188"/>
        <dbReference type="Rhea" id="RHEA-COMP:15541"/>
        <dbReference type="Rhea" id="RHEA-COMP:15546"/>
        <dbReference type="ChEBI" id="CHEBI:15379"/>
        <dbReference type="ChEBI" id="CHEBI:16526"/>
        <dbReference type="ChEBI" id="CHEBI:16810"/>
        <dbReference type="ChEBI" id="CHEBI:16842"/>
        <dbReference type="ChEBI" id="CHEBI:29969"/>
        <dbReference type="ChEBI" id="CHEBI:30031"/>
        <dbReference type="ChEBI" id="CHEBI:61976"/>
        <dbReference type="EC" id="1.14.11.65"/>
    </reaction>
    <physiologicalReaction direction="left-to-right" evidence="8">
        <dbReference type="Rhea" id="RHEA:60189"/>
    </physiologicalReaction>
</comment>
<comment type="catalytic activity">
    <reaction evidence="2">
        <text>N(6),N(6)-dimethyl-L-lysyl(27)-[histone H3] + 2 2-oxoglutarate + 2 O2 = L-lysyl(27)-[histone H3] + 2 formaldehyde + 2 succinate + 2 CO2</text>
        <dbReference type="Rhea" id="RHEA:67800"/>
        <dbReference type="Rhea" id="RHEA-COMP:15539"/>
        <dbReference type="Rhea" id="RHEA-COMP:15548"/>
        <dbReference type="ChEBI" id="CHEBI:15379"/>
        <dbReference type="ChEBI" id="CHEBI:16526"/>
        <dbReference type="ChEBI" id="CHEBI:16810"/>
        <dbReference type="ChEBI" id="CHEBI:16842"/>
        <dbReference type="ChEBI" id="CHEBI:29969"/>
        <dbReference type="ChEBI" id="CHEBI:30031"/>
        <dbReference type="ChEBI" id="CHEBI:61976"/>
    </reaction>
    <physiologicalReaction direction="left-to-right" evidence="2">
        <dbReference type="Rhea" id="RHEA:67801"/>
    </physiologicalReaction>
</comment>
<comment type="catalytic activity">
    <reaction evidence="6">
        <text>N(6),N(6)-dimethyl-L-lysyl(36)-[histone H3] + 2-oxoglutarate + O2 = N(6)-methyl-L-lysyl(36)-[histone H3] + formaldehyde + succinate + CO2</text>
        <dbReference type="Rhea" id="RHEA:21788"/>
        <dbReference type="Rhea" id="RHEA-COMP:9786"/>
        <dbReference type="Rhea" id="RHEA-COMP:9787"/>
        <dbReference type="ChEBI" id="CHEBI:15379"/>
        <dbReference type="ChEBI" id="CHEBI:16526"/>
        <dbReference type="ChEBI" id="CHEBI:16810"/>
        <dbReference type="ChEBI" id="CHEBI:16842"/>
        <dbReference type="ChEBI" id="CHEBI:30031"/>
        <dbReference type="ChEBI" id="CHEBI:61929"/>
        <dbReference type="ChEBI" id="CHEBI:61976"/>
    </reaction>
    <physiologicalReaction direction="left-to-right" evidence="8">
        <dbReference type="Rhea" id="RHEA:21789"/>
    </physiologicalReaction>
</comment>
<comment type="catalytic activity">
    <reaction evidence="2">
        <text>N(6)-methyl-L-lysyl(20)-[histone H4] + 2-oxoglutarate + O2 = L-lysyl(20)-[histone H4] + formaldehyde + succinate + CO2</text>
        <dbReference type="Rhea" id="RHEA:67804"/>
        <dbReference type="Rhea" id="RHEA-COMP:15554"/>
        <dbReference type="Rhea" id="RHEA-COMP:15555"/>
        <dbReference type="ChEBI" id="CHEBI:15379"/>
        <dbReference type="ChEBI" id="CHEBI:16526"/>
        <dbReference type="ChEBI" id="CHEBI:16810"/>
        <dbReference type="ChEBI" id="CHEBI:16842"/>
        <dbReference type="ChEBI" id="CHEBI:29969"/>
        <dbReference type="ChEBI" id="CHEBI:30031"/>
        <dbReference type="ChEBI" id="CHEBI:61929"/>
    </reaction>
    <physiologicalReaction direction="left-to-right" evidence="2">
        <dbReference type="Rhea" id="RHEA:67805"/>
    </physiologicalReaction>
</comment>
<comment type="cofactor">
    <cofactor evidence="6">
        <name>Fe(2+)</name>
        <dbReference type="ChEBI" id="CHEBI:29033"/>
    </cofactor>
    <text evidence="2">Binds 1 Fe(2+) ion per subunit.</text>
</comment>
<comment type="subcellular location">
    <subcellularLocation>
        <location evidence="1">Nucleus</location>
    </subcellularLocation>
</comment>
<comment type="domain">
    <text evidence="2">The PHD-type zinc finger mediates the binding to H3K4me3. Binding to H3K4me3 prevents its access to H3K9me2.</text>
</comment>
<comment type="domain">
    <text evidence="2">The linker region is a critical determinant of demethylase specificity. It prevents the active site of JmjC to reach the target H3K9me2 when the PHD-type zinc finger binds to H3K4me3, while it favors selectivity toward H3K27me2.</text>
</comment>
<comment type="similarity">
    <text evidence="7">Belongs to the JHDM1 histone demethylase family. JHDM1D subfamily.</text>
</comment>
<comment type="sequence caution" evidence="7">
    <conflict type="erroneous initiation">
        <sequence resource="EMBL-CDS" id="AAI45849"/>
    </conflict>
    <text>Truncated N-terminus.</text>
</comment>
<comment type="sequence caution" evidence="7">
    <conflict type="erroneous initiation">
        <sequence resource="EMBL-CDS" id="BAE22876"/>
    </conflict>
    <text>Truncated N-terminus.</text>
</comment>
<evidence type="ECO:0000250" key="1"/>
<evidence type="ECO:0000250" key="2">
    <source>
        <dbReference type="UniProtKB" id="Q6ZMT4"/>
    </source>
</evidence>
<evidence type="ECO:0000255" key="3">
    <source>
        <dbReference type="PROSITE-ProRule" id="PRU00146"/>
    </source>
</evidence>
<evidence type="ECO:0000255" key="4">
    <source>
        <dbReference type="PROSITE-ProRule" id="PRU00538"/>
    </source>
</evidence>
<evidence type="ECO:0000256" key="5">
    <source>
        <dbReference type="SAM" id="MobiDB-lite"/>
    </source>
</evidence>
<evidence type="ECO:0000269" key="6">
    <source>
    </source>
</evidence>
<evidence type="ECO:0000305" key="7"/>
<evidence type="ECO:0000305" key="8">
    <source>
    </source>
</evidence>
<proteinExistence type="evidence at protein level"/>
<gene>
    <name type="primary">Kdm7a</name>
    <name type="synonym">Jhdm1d</name>
    <name type="synonym">Kdm7</name>
    <name type="synonym">Kiaa1718</name>
</gene>
<organism>
    <name type="scientific">Mus musculus</name>
    <name type="common">Mouse</name>
    <dbReference type="NCBI Taxonomy" id="10090"/>
    <lineage>
        <taxon>Eukaryota</taxon>
        <taxon>Metazoa</taxon>
        <taxon>Chordata</taxon>
        <taxon>Craniata</taxon>
        <taxon>Vertebrata</taxon>
        <taxon>Euteleostomi</taxon>
        <taxon>Mammalia</taxon>
        <taxon>Eutheria</taxon>
        <taxon>Euarchontoglires</taxon>
        <taxon>Glires</taxon>
        <taxon>Rodentia</taxon>
        <taxon>Myomorpha</taxon>
        <taxon>Muroidea</taxon>
        <taxon>Muridae</taxon>
        <taxon>Murinae</taxon>
        <taxon>Mus</taxon>
        <taxon>Mus</taxon>
    </lineage>
</organism>
<name>KDM7A_MOUSE</name>
<reference key="1">
    <citation type="journal article" date="2005" name="Science">
        <title>The transcriptional landscape of the mammalian genome.</title>
        <authorList>
            <person name="Carninci P."/>
            <person name="Kasukawa T."/>
            <person name="Katayama S."/>
            <person name="Gough J."/>
            <person name="Frith M.C."/>
            <person name="Maeda N."/>
            <person name="Oyama R."/>
            <person name="Ravasi T."/>
            <person name="Lenhard B."/>
            <person name="Wells C."/>
            <person name="Kodzius R."/>
            <person name="Shimokawa K."/>
            <person name="Bajic V.B."/>
            <person name="Brenner S.E."/>
            <person name="Batalov S."/>
            <person name="Forrest A.R."/>
            <person name="Zavolan M."/>
            <person name="Davis M.J."/>
            <person name="Wilming L.G."/>
            <person name="Aidinis V."/>
            <person name="Allen J.E."/>
            <person name="Ambesi-Impiombato A."/>
            <person name="Apweiler R."/>
            <person name="Aturaliya R.N."/>
            <person name="Bailey T.L."/>
            <person name="Bansal M."/>
            <person name="Baxter L."/>
            <person name="Beisel K.W."/>
            <person name="Bersano T."/>
            <person name="Bono H."/>
            <person name="Chalk A.M."/>
            <person name="Chiu K.P."/>
            <person name="Choudhary V."/>
            <person name="Christoffels A."/>
            <person name="Clutterbuck D.R."/>
            <person name="Crowe M.L."/>
            <person name="Dalla E."/>
            <person name="Dalrymple B.P."/>
            <person name="de Bono B."/>
            <person name="Della Gatta G."/>
            <person name="di Bernardo D."/>
            <person name="Down T."/>
            <person name="Engstrom P."/>
            <person name="Fagiolini M."/>
            <person name="Faulkner G."/>
            <person name="Fletcher C.F."/>
            <person name="Fukushima T."/>
            <person name="Furuno M."/>
            <person name="Futaki S."/>
            <person name="Gariboldi M."/>
            <person name="Georgii-Hemming P."/>
            <person name="Gingeras T.R."/>
            <person name="Gojobori T."/>
            <person name="Green R.E."/>
            <person name="Gustincich S."/>
            <person name="Harbers M."/>
            <person name="Hayashi Y."/>
            <person name="Hensch T.K."/>
            <person name="Hirokawa N."/>
            <person name="Hill D."/>
            <person name="Huminiecki L."/>
            <person name="Iacono M."/>
            <person name="Ikeo K."/>
            <person name="Iwama A."/>
            <person name="Ishikawa T."/>
            <person name="Jakt M."/>
            <person name="Kanapin A."/>
            <person name="Katoh M."/>
            <person name="Kawasawa Y."/>
            <person name="Kelso J."/>
            <person name="Kitamura H."/>
            <person name="Kitano H."/>
            <person name="Kollias G."/>
            <person name="Krishnan S.P."/>
            <person name="Kruger A."/>
            <person name="Kummerfeld S.K."/>
            <person name="Kurochkin I.V."/>
            <person name="Lareau L.F."/>
            <person name="Lazarevic D."/>
            <person name="Lipovich L."/>
            <person name="Liu J."/>
            <person name="Liuni S."/>
            <person name="McWilliam S."/>
            <person name="Madan Babu M."/>
            <person name="Madera M."/>
            <person name="Marchionni L."/>
            <person name="Matsuda H."/>
            <person name="Matsuzawa S."/>
            <person name="Miki H."/>
            <person name="Mignone F."/>
            <person name="Miyake S."/>
            <person name="Morris K."/>
            <person name="Mottagui-Tabar S."/>
            <person name="Mulder N."/>
            <person name="Nakano N."/>
            <person name="Nakauchi H."/>
            <person name="Ng P."/>
            <person name="Nilsson R."/>
            <person name="Nishiguchi S."/>
            <person name="Nishikawa S."/>
            <person name="Nori F."/>
            <person name="Ohara O."/>
            <person name="Okazaki Y."/>
            <person name="Orlando V."/>
            <person name="Pang K.C."/>
            <person name="Pavan W.J."/>
            <person name="Pavesi G."/>
            <person name="Pesole G."/>
            <person name="Petrovsky N."/>
            <person name="Piazza S."/>
            <person name="Reed J."/>
            <person name="Reid J.F."/>
            <person name="Ring B.Z."/>
            <person name="Ringwald M."/>
            <person name="Rost B."/>
            <person name="Ruan Y."/>
            <person name="Salzberg S.L."/>
            <person name="Sandelin A."/>
            <person name="Schneider C."/>
            <person name="Schoenbach C."/>
            <person name="Sekiguchi K."/>
            <person name="Semple C.A."/>
            <person name="Seno S."/>
            <person name="Sessa L."/>
            <person name="Sheng Y."/>
            <person name="Shibata Y."/>
            <person name="Shimada H."/>
            <person name="Shimada K."/>
            <person name="Silva D."/>
            <person name="Sinclair B."/>
            <person name="Sperling S."/>
            <person name="Stupka E."/>
            <person name="Sugiura K."/>
            <person name="Sultana R."/>
            <person name="Takenaka Y."/>
            <person name="Taki K."/>
            <person name="Tammoja K."/>
            <person name="Tan S.L."/>
            <person name="Tang S."/>
            <person name="Taylor M.S."/>
            <person name="Tegner J."/>
            <person name="Teichmann S.A."/>
            <person name="Ueda H.R."/>
            <person name="van Nimwegen E."/>
            <person name="Verardo R."/>
            <person name="Wei C.L."/>
            <person name="Yagi K."/>
            <person name="Yamanishi H."/>
            <person name="Zabarovsky E."/>
            <person name="Zhu S."/>
            <person name="Zimmer A."/>
            <person name="Hide W."/>
            <person name="Bult C."/>
            <person name="Grimmond S.M."/>
            <person name="Teasdale R.D."/>
            <person name="Liu E.T."/>
            <person name="Brusic V."/>
            <person name="Quackenbush J."/>
            <person name="Wahlestedt C."/>
            <person name="Mattick J.S."/>
            <person name="Hume D.A."/>
            <person name="Kai C."/>
            <person name="Sasaki D."/>
            <person name="Tomaru Y."/>
            <person name="Fukuda S."/>
            <person name="Kanamori-Katayama M."/>
            <person name="Suzuki M."/>
            <person name="Aoki J."/>
            <person name="Arakawa T."/>
            <person name="Iida J."/>
            <person name="Imamura K."/>
            <person name="Itoh M."/>
            <person name="Kato T."/>
            <person name="Kawaji H."/>
            <person name="Kawagashira N."/>
            <person name="Kawashima T."/>
            <person name="Kojima M."/>
            <person name="Kondo S."/>
            <person name="Konno H."/>
            <person name="Nakano K."/>
            <person name="Ninomiya N."/>
            <person name="Nishio T."/>
            <person name="Okada M."/>
            <person name="Plessy C."/>
            <person name="Shibata K."/>
            <person name="Shiraki T."/>
            <person name="Suzuki S."/>
            <person name="Tagami M."/>
            <person name="Waki K."/>
            <person name="Watahiki A."/>
            <person name="Okamura-Oho Y."/>
            <person name="Suzuki H."/>
            <person name="Kawai J."/>
            <person name="Hayashizaki Y."/>
        </authorList>
    </citation>
    <scope>NUCLEOTIDE SEQUENCE [LARGE SCALE MRNA]</scope>
    <source>
        <strain>C57BL/6J</strain>
        <tissue>Cerebellum</tissue>
        <tissue>Egg</tissue>
        <tissue>Thymus</tissue>
    </source>
</reference>
<reference key="2">
    <citation type="journal article" date="2004" name="Genome Res.">
        <title>The status, quality, and expansion of the NIH full-length cDNA project: the Mammalian Gene Collection (MGC).</title>
        <authorList>
            <consortium name="The MGC Project Team"/>
        </authorList>
    </citation>
    <scope>NUCLEOTIDE SEQUENCE [LARGE SCALE MRNA]</scope>
    <source>
        <tissue>Brain</tissue>
        <tissue>Mammary tumor</tissue>
    </source>
</reference>
<reference key="3">
    <citation type="journal article" date="2003" name="DNA Res.">
        <title>Prediction of the coding sequences of mouse homologues of KIAA gene: III. The complete nucleotide sequences of 500 mouse KIAA-homologous cDNAs identified by screening of terminal sequences of cDNA clones randomly sampled from size-fractionated libraries.</title>
        <authorList>
            <person name="Okazaki N."/>
            <person name="Kikuno R."/>
            <person name="Ohara R."/>
            <person name="Inamoto S."/>
            <person name="Koseki H."/>
            <person name="Hiraoka S."/>
            <person name="Saga Y."/>
            <person name="Nagase T."/>
            <person name="Ohara O."/>
            <person name="Koga H."/>
        </authorList>
    </citation>
    <scope>NUCLEOTIDE SEQUENCE [LARGE SCALE MRNA] OF 508-940</scope>
    <source>
        <tissue>Embryonic tail</tissue>
    </source>
</reference>
<reference key="4">
    <citation type="journal article" date="2010" name="Genes Dev.">
        <title>KDM7 is a dual demethylase for histone H3 Lys 9 and Lys 27 and functions in brain development.</title>
        <authorList>
            <person name="Tsukada Y."/>
            <person name="Ishitani T."/>
            <person name="Nakayama K.I."/>
        </authorList>
    </citation>
    <scope>FUNCTION</scope>
    <scope>CATALYTIC ACTIVITY</scope>
    <scope>COFACTOR</scope>
    <scope>MUTAGENESIS OF 39-TYR--ALA-86; 230-PHE--LYS-386 AND HIS-282</scope>
</reference>
<protein>
    <recommendedName>
        <fullName>Lysine-specific demethylase 7A</fullName>
    </recommendedName>
    <alternativeName>
        <fullName>JmjC domain-containing histone demethylation protein 1D</fullName>
    </alternativeName>
    <alternativeName>
        <fullName>Lysine-specific demethylase 7</fullName>
    </alternativeName>
    <alternativeName>
        <fullName>[histone H3]-dimethyl-L-lysine9 demethylase 7A</fullName>
        <ecNumber evidence="6">1.14.11.65</ecNumber>
    </alternativeName>
</protein>
<accession>Q3UWM4</accession>
<accession>A6H6E5</accession>
<accession>Q3UWN8</accession>
<accession>Q6ZPJ5</accession>
<accession>Q8C969</accession>
<accession>Q8C9E0</accession>
<accession>Q91VX8</accession>
<feature type="chain" id="PRO_0000226772" description="Lysine-specific demethylase 7A">
    <location>
        <begin position="1"/>
        <end position="940"/>
    </location>
</feature>
<feature type="domain" description="JmjC" evidence="4">
    <location>
        <begin position="230"/>
        <end position="386"/>
    </location>
</feature>
<feature type="zinc finger region" description="PHD-type" evidence="3">
    <location>
        <begin position="37"/>
        <end position="88"/>
    </location>
</feature>
<feature type="region of interest" description="Linker" evidence="1">
    <location>
        <begin position="97"/>
        <end position="114"/>
    </location>
</feature>
<feature type="region of interest" description="Disordered" evidence="5">
    <location>
        <begin position="483"/>
        <end position="509"/>
    </location>
</feature>
<feature type="region of interest" description="Disordered" evidence="5">
    <location>
        <begin position="599"/>
        <end position="670"/>
    </location>
</feature>
<feature type="region of interest" description="Disordered" evidence="5">
    <location>
        <begin position="710"/>
        <end position="729"/>
    </location>
</feature>
<feature type="region of interest" description="Disordered" evidence="5">
    <location>
        <begin position="818"/>
        <end position="854"/>
    </location>
</feature>
<feature type="region of interest" description="Disordered" evidence="5">
    <location>
        <begin position="876"/>
        <end position="920"/>
    </location>
</feature>
<feature type="compositionally biased region" description="Polar residues" evidence="5">
    <location>
        <begin position="613"/>
        <end position="623"/>
    </location>
</feature>
<feature type="compositionally biased region" description="Basic and acidic residues" evidence="5">
    <location>
        <begin position="714"/>
        <end position="724"/>
    </location>
</feature>
<feature type="binding site" evidence="1">
    <location>
        <position position="279"/>
    </location>
    <ligand>
        <name>substrate</name>
    </ligand>
</feature>
<feature type="binding site" evidence="4">
    <location>
        <position position="282"/>
    </location>
    <ligand>
        <name>Fe cation</name>
        <dbReference type="ChEBI" id="CHEBI:24875"/>
        <note>catalytic</note>
    </ligand>
</feature>
<feature type="binding site" evidence="4">
    <location>
        <position position="284"/>
    </location>
    <ligand>
        <name>Fe cation</name>
        <dbReference type="ChEBI" id="CHEBI:24875"/>
        <note>catalytic</note>
    </ligand>
</feature>
<feature type="binding site" evidence="1">
    <location>
        <position position="299"/>
    </location>
    <ligand>
        <name>substrate</name>
    </ligand>
</feature>
<feature type="binding site" evidence="4">
    <location>
        <position position="354"/>
    </location>
    <ligand>
        <name>Fe cation</name>
        <dbReference type="ChEBI" id="CHEBI:24875"/>
        <note>catalytic</note>
    </ligand>
</feature>
<feature type="modified residue" description="Phosphoserine" evidence="2">
    <location>
        <position position="604"/>
    </location>
</feature>
<feature type="mutagenesis site" description="Has no effect on enzymatic activity." evidence="6">
    <location>
        <begin position="39"/>
        <end position="86"/>
    </location>
</feature>
<feature type="mutagenesis site" description="Abolishes enzymatic activity." evidence="6">
    <location>
        <begin position="230"/>
        <end position="386"/>
    </location>
</feature>
<feature type="mutagenesis site" description="Abolishes enzymatic activity." evidence="6">
    <original>H</original>
    <variation>A</variation>
    <location>
        <position position="282"/>
    </location>
</feature>
<feature type="sequence conflict" description="In Ref. 1; BAE22890." evidence="7" ref="1">
    <original>N</original>
    <variation>D</variation>
    <location>
        <position position="372"/>
    </location>
</feature>
<keyword id="KW-0156">Chromatin regulator</keyword>
<keyword id="KW-0223">Dioxygenase</keyword>
<keyword id="KW-0408">Iron</keyword>
<keyword id="KW-0479">Metal-binding</keyword>
<keyword id="KW-0524">Neurogenesis</keyword>
<keyword id="KW-0539">Nucleus</keyword>
<keyword id="KW-0560">Oxidoreductase</keyword>
<keyword id="KW-0597">Phosphoprotein</keyword>
<keyword id="KW-1185">Reference proteome</keyword>
<keyword id="KW-0804">Transcription</keyword>
<keyword id="KW-0805">Transcription regulation</keyword>
<keyword id="KW-0862">Zinc</keyword>
<keyword id="KW-0863">Zinc-finger</keyword>
<sequence>MAGAAAAVAAGAAAGAAAAAGSVSAPGRASAPPPPPPVYCVCRQPYDVNRFMIECDVCKDWFHGSCVGVEEHHAVDIDLYHCPDCAALHGSSLMKKRRNWHRHDYTEVDDGSKPVQAGTRAFVKELRSRVFPSADEIIVKMHGSQLTQRYLEKHGFDVPIMVPKLDDLGLRLPSPAFSVMDVERYVGGDKVIDVIDVARQADSKMTLHNYVKYFMNPDRPKVLNVISLEFSDTKMSELVEVPDIARKLSWVENYWPDDSVFPKPFVQKYCLMGVQDSYTDFHIDFGGTSVWYHVLWGEKIFYLIKPTNENLALYESWSSSVTQSEVFFGDKVDKCYKCVVKQGHTLFVPTGWIHAVLTSQDCMAFGGNFLHNLNIGMQLRCYEMEKRLKTPDLFKFPFFEAICWFVAKSLLETLKELKEDGFQPQSYLVQGVKALHTALKLWMKKELVSEHAFEIPDNVRPGHLIKELSKVIRAIEEENGKPVKSQGIPSVCPVSRPSNEASPPYHSRRKMRKLRDHNVRTPSNLDILELHTREVLKRLEMCPWEEDLLSSKLNGKFNKHLQPSSTVPEWRAKDNDLRLLLTNGRIIKDERQLFADRSLYTADSENEEDKKPTQNANMKTEQSSGREEAESQGSPKPLNRIFTSVRSELRSRPSEYSDGSDSEDSGPDCTALKINFATEDSESSGDEKKHEITSHFKEESDIVRNLLQKSQKPSRQEIPVKRECPTSTSTEEEAIQGMLSMAGLHYSSCLQRQIQSTDCSGEKNSLQDPSSCHGSNPEFRQLYRCNKPVEFGYHAKTEDQDLMTSSWNKQFDRTSRFNAQDLSRSQKHIKKESSSEINQKAQSRHCVDSNSSSIQNGKYTLNPSLVSCQISNGSLSPERPIGETSFSMPLHPTKRPASNPPPISNQATKGKRPKKGMATAKQRLGKILKLNRNGHARFFV</sequence>
<dbReference type="EC" id="1.14.11.65" evidence="6"/>
<dbReference type="EMBL" id="AK042327">
    <property type="protein sequence ID" value="BAC31226.2"/>
    <property type="molecule type" value="mRNA"/>
</dbReference>
<dbReference type="EMBL" id="AK042834">
    <property type="protein sequence ID" value="BAC31377.1"/>
    <property type="molecule type" value="mRNA"/>
</dbReference>
<dbReference type="EMBL" id="AK136209">
    <property type="protein sequence ID" value="BAE22876.1"/>
    <property type="status" value="ALT_INIT"/>
    <property type="molecule type" value="mRNA"/>
</dbReference>
<dbReference type="EMBL" id="AK136238">
    <property type="protein sequence ID" value="BAE22890.1"/>
    <property type="molecule type" value="mRNA"/>
</dbReference>
<dbReference type="EMBL" id="BC007161">
    <property type="protein sequence ID" value="AAH07161.1"/>
    <property type="molecule type" value="mRNA"/>
</dbReference>
<dbReference type="EMBL" id="BC145848">
    <property type="protein sequence ID" value="AAI45849.1"/>
    <property type="status" value="ALT_INIT"/>
    <property type="molecule type" value="mRNA"/>
</dbReference>
<dbReference type="EMBL" id="AK129429">
    <property type="protein sequence ID" value="BAC98239.1"/>
    <property type="molecule type" value="mRNA"/>
</dbReference>
<dbReference type="CCDS" id="CCDS51753.1"/>
<dbReference type="RefSeq" id="NP_001028602.2">
    <property type="nucleotide sequence ID" value="NM_001033430.5"/>
</dbReference>
<dbReference type="SMR" id="Q3UWM4"/>
<dbReference type="FunCoup" id="Q3UWM4">
    <property type="interactions" value="1613"/>
</dbReference>
<dbReference type="STRING" id="10090.ENSMUSP00000002305"/>
<dbReference type="ChEMBL" id="CHEMBL3038497"/>
<dbReference type="iPTMnet" id="Q3UWM4"/>
<dbReference type="PhosphoSitePlus" id="Q3UWM4"/>
<dbReference type="PaxDb" id="10090-ENSMUSP00000002305"/>
<dbReference type="PeptideAtlas" id="Q3UWM4"/>
<dbReference type="ProteomicsDB" id="264993"/>
<dbReference type="Antibodypedia" id="2004">
    <property type="antibodies" value="107 antibodies from 19 providers"/>
</dbReference>
<dbReference type="Ensembl" id="ENSMUST00000002305.9">
    <property type="protein sequence ID" value="ENSMUSP00000002305.9"/>
    <property type="gene ID" value="ENSMUSG00000042599.9"/>
</dbReference>
<dbReference type="GeneID" id="338523"/>
<dbReference type="KEGG" id="mmu:338523"/>
<dbReference type="UCSC" id="uc009bli.2">
    <property type="organism name" value="mouse"/>
</dbReference>
<dbReference type="AGR" id="MGI:2443388"/>
<dbReference type="CTD" id="80853"/>
<dbReference type="MGI" id="MGI:2443388">
    <property type="gene designation" value="Kdm7a"/>
</dbReference>
<dbReference type="VEuPathDB" id="HostDB:ENSMUSG00000042599"/>
<dbReference type="eggNOG" id="KOG1633">
    <property type="taxonomic scope" value="Eukaryota"/>
</dbReference>
<dbReference type="eggNOG" id="KOG1634">
    <property type="taxonomic scope" value="Eukaryota"/>
</dbReference>
<dbReference type="GeneTree" id="ENSGT00940000158039"/>
<dbReference type="HOGENOM" id="CLU_003540_2_1_1"/>
<dbReference type="InParanoid" id="Q3UWM4"/>
<dbReference type="OMA" id="PWEEDIT"/>
<dbReference type="OrthoDB" id="5876800at2759"/>
<dbReference type="PhylomeDB" id="Q3UWM4"/>
<dbReference type="TreeFam" id="TF106480"/>
<dbReference type="Reactome" id="R-MMU-3214842">
    <property type="pathway name" value="HDMs demethylate histones"/>
</dbReference>
<dbReference type="BioGRID-ORCS" id="338523">
    <property type="hits" value="2 hits in 79 CRISPR screens"/>
</dbReference>
<dbReference type="ChiTaRS" id="Kdm7a">
    <property type="organism name" value="mouse"/>
</dbReference>
<dbReference type="PRO" id="PR:Q3UWM4"/>
<dbReference type="Proteomes" id="UP000000589">
    <property type="component" value="Chromosome 6"/>
</dbReference>
<dbReference type="RNAct" id="Q3UWM4">
    <property type="molecule type" value="protein"/>
</dbReference>
<dbReference type="Bgee" id="ENSMUSG00000042599">
    <property type="expression patterns" value="Expressed in blood and 228 other cell types or tissues"/>
</dbReference>
<dbReference type="GO" id="GO:0005730">
    <property type="term" value="C:nucleolus"/>
    <property type="evidence" value="ECO:0007669"/>
    <property type="project" value="Ensembl"/>
</dbReference>
<dbReference type="GO" id="GO:0005654">
    <property type="term" value="C:nucleoplasm"/>
    <property type="evidence" value="ECO:0007669"/>
    <property type="project" value="Ensembl"/>
</dbReference>
<dbReference type="GO" id="GO:0071558">
    <property type="term" value="F:histone H3K27me2/H3K27me3 demethylase activity"/>
    <property type="evidence" value="ECO:0000315"/>
    <property type="project" value="UniProtKB"/>
</dbReference>
<dbReference type="GO" id="GO:0051864">
    <property type="term" value="F:histone H3K36 demethylase activity"/>
    <property type="evidence" value="ECO:0000250"/>
    <property type="project" value="UniProtKB"/>
</dbReference>
<dbReference type="GO" id="GO:0032454">
    <property type="term" value="F:histone H3K9 demethylase activity"/>
    <property type="evidence" value="ECO:0000315"/>
    <property type="project" value="UniProtKB"/>
</dbReference>
<dbReference type="GO" id="GO:0140683">
    <property type="term" value="F:histone H3K9me/H3K9me2 demethylase activity"/>
    <property type="evidence" value="ECO:0007669"/>
    <property type="project" value="Ensembl"/>
</dbReference>
<dbReference type="GO" id="GO:0035575">
    <property type="term" value="F:histone H4K20 demethylase activity"/>
    <property type="evidence" value="ECO:0000250"/>
    <property type="project" value="UniProtKB"/>
</dbReference>
<dbReference type="GO" id="GO:0005506">
    <property type="term" value="F:iron ion binding"/>
    <property type="evidence" value="ECO:0000250"/>
    <property type="project" value="UniProtKB"/>
</dbReference>
<dbReference type="GO" id="GO:0008270">
    <property type="term" value="F:zinc ion binding"/>
    <property type="evidence" value="ECO:0000250"/>
    <property type="project" value="UniProtKB"/>
</dbReference>
<dbReference type="GO" id="GO:0030901">
    <property type="term" value="P:midbrain development"/>
    <property type="evidence" value="ECO:0000250"/>
    <property type="project" value="UniProtKB"/>
</dbReference>
<dbReference type="GO" id="GO:0045893">
    <property type="term" value="P:positive regulation of DNA-templated transcription"/>
    <property type="evidence" value="ECO:0000315"/>
    <property type="project" value="UniProtKB"/>
</dbReference>
<dbReference type="CDD" id="cd15640">
    <property type="entry name" value="PHD_KDM7"/>
    <property type="match status" value="1"/>
</dbReference>
<dbReference type="FunFam" id="1.20.58.1360:FF:000003">
    <property type="entry name" value="Lysine-specific demethylase 7A"/>
    <property type="match status" value="1"/>
</dbReference>
<dbReference type="FunFam" id="2.60.120.650:FF:000021">
    <property type="entry name" value="Lysine-specific demethylase 7A"/>
    <property type="match status" value="1"/>
</dbReference>
<dbReference type="FunFam" id="3.30.40.10:FF:000193">
    <property type="entry name" value="lysine-specific demethylase PHF2 isoform X1"/>
    <property type="match status" value="1"/>
</dbReference>
<dbReference type="Gene3D" id="1.20.58.1360">
    <property type="match status" value="1"/>
</dbReference>
<dbReference type="Gene3D" id="2.60.120.650">
    <property type="entry name" value="Cupin"/>
    <property type="match status" value="1"/>
</dbReference>
<dbReference type="Gene3D" id="3.30.40.10">
    <property type="entry name" value="Zinc/RING finger domain, C3HC4 (zinc finger)"/>
    <property type="match status" value="1"/>
</dbReference>
<dbReference type="InterPro" id="IPR041070">
    <property type="entry name" value="JHD"/>
</dbReference>
<dbReference type="InterPro" id="IPR050690">
    <property type="entry name" value="JHDM1_Histone_Demethylase"/>
</dbReference>
<dbReference type="InterPro" id="IPR003347">
    <property type="entry name" value="JmjC_dom"/>
</dbReference>
<dbReference type="InterPro" id="IPR019786">
    <property type="entry name" value="Zinc_finger_PHD-type_CS"/>
</dbReference>
<dbReference type="InterPro" id="IPR011011">
    <property type="entry name" value="Znf_FYVE_PHD"/>
</dbReference>
<dbReference type="InterPro" id="IPR001965">
    <property type="entry name" value="Znf_PHD"/>
</dbReference>
<dbReference type="InterPro" id="IPR019787">
    <property type="entry name" value="Znf_PHD-finger"/>
</dbReference>
<dbReference type="InterPro" id="IPR013083">
    <property type="entry name" value="Znf_RING/FYVE/PHD"/>
</dbReference>
<dbReference type="PANTHER" id="PTHR23123">
    <property type="entry name" value="PHD/F-BOX CONTAINING PROTEIN"/>
    <property type="match status" value="1"/>
</dbReference>
<dbReference type="Pfam" id="PF17811">
    <property type="entry name" value="JHD"/>
    <property type="match status" value="1"/>
</dbReference>
<dbReference type="Pfam" id="PF02373">
    <property type="entry name" value="JmjC"/>
    <property type="match status" value="1"/>
</dbReference>
<dbReference type="Pfam" id="PF00628">
    <property type="entry name" value="PHD"/>
    <property type="match status" value="1"/>
</dbReference>
<dbReference type="SMART" id="SM00558">
    <property type="entry name" value="JmjC"/>
    <property type="match status" value="1"/>
</dbReference>
<dbReference type="SMART" id="SM00249">
    <property type="entry name" value="PHD"/>
    <property type="match status" value="1"/>
</dbReference>
<dbReference type="SUPFAM" id="SSF51197">
    <property type="entry name" value="Clavaminate synthase-like"/>
    <property type="match status" value="1"/>
</dbReference>
<dbReference type="SUPFAM" id="SSF57903">
    <property type="entry name" value="FYVE/PHD zinc finger"/>
    <property type="match status" value="1"/>
</dbReference>
<dbReference type="PROSITE" id="PS51184">
    <property type="entry name" value="JMJC"/>
    <property type="match status" value="1"/>
</dbReference>
<dbReference type="PROSITE" id="PS01359">
    <property type="entry name" value="ZF_PHD_1"/>
    <property type="match status" value="1"/>
</dbReference>
<dbReference type="PROSITE" id="PS50016">
    <property type="entry name" value="ZF_PHD_2"/>
    <property type="match status" value="1"/>
</dbReference>